<accession>Q05338</accession>
<accession>Q66DP6</accession>
<organism>
    <name type="scientific">Yersinia pseudotuberculosis serotype I (strain IP32953)</name>
    <dbReference type="NCBI Taxonomy" id="273123"/>
    <lineage>
        <taxon>Bacteria</taxon>
        <taxon>Pseudomonadati</taxon>
        <taxon>Pseudomonadota</taxon>
        <taxon>Gammaproteobacteria</taxon>
        <taxon>Enterobacterales</taxon>
        <taxon>Yersiniaceae</taxon>
        <taxon>Yersinia</taxon>
    </lineage>
</organism>
<protein>
    <recommendedName>
        <fullName evidence="1">Ferrochelatase</fullName>
        <ecNumber evidence="1">4.98.1.1</ecNumber>
    </recommendedName>
    <alternativeName>
        <fullName evidence="1">Heme synthase</fullName>
    </alternativeName>
    <alternativeName>
        <fullName evidence="1">Protoheme ferro-lyase</fullName>
    </alternativeName>
</protein>
<dbReference type="EC" id="4.98.1.1" evidence="1"/>
<dbReference type="EMBL" id="BX936398">
    <property type="protein sequence ID" value="CAH20237.1"/>
    <property type="molecule type" value="Genomic_DNA"/>
</dbReference>
<dbReference type="EMBL" id="AF461770">
    <property type="protein sequence ID" value="AAB49397.1"/>
    <property type="molecule type" value="Genomic_DNA"/>
</dbReference>
<dbReference type="PIR" id="A47070">
    <property type="entry name" value="A47070"/>
</dbReference>
<dbReference type="RefSeq" id="WP_002208599.1">
    <property type="nucleotide sequence ID" value="NZ_CP009712.1"/>
</dbReference>
<dbReference type="SMR" id="Q05338"/>
<dbReference type="GeneID" id="57975594"/>
<dbReference type="KEGG" id="yps:YPTB0997"/>
<dbReference type="UniPathway" id="UPA00252">
    <property type="reaction ID" value="UER00325"/>
</dbReference>
<dbReference type="Proteomes" id="UP000001011">
    <property type="component" value="Chromosome"/>
</dbReference>
<dbReference type="GO" id="GO:0005737">
    <property type="term" value="C:cytoplasm"/>
    <property type="evidence" value="ECO:0007669"/>
    <property type="project" value="UniProtKB-SubCell"/>
</dbReference>
<dbReference type="GO" id="GO:0004325">
    <property type="term" value="F:ferrochelatase activity"/>
    <property type="evidence" value="ECO:0007669"/>
    <property type="project" value="UniProtKB-UniRule"/>
</dbReference>
<dbReference type="GO" id="GO:0046872">
    <property type="term" value="F:metal ion binding"/>
    <property type="evidence" value="ECO:0007669"/>
    <property type="project" value="UniProtKB-KW"/>
</dbReference>
<dbReference type="GO" id="GO:0006783">
    <property type="term" value="P:heme biosynthetic process"/>
    <property type="evidence" value="ECO:0007669"/>
    <property type="project" value="UniProtKB-UniRule"/>
</dbReference>
<dbReference type="CDD" id="cd00419">
    <property type="entry name" value="Ferrochelatase_C"/>
    <property type="match status" value="1"/>
</dbReference>
<dbReference type="CDD" id="cd03411">
    <property type="entry name" value="Ferrochelatase_N"/>
    <property type="match status" value="1"/>
</dbReference>
<dbReference type="FunFam" id="3.40.50.1400:FF:000004">
    <property type="entry name" value="Ferrochelatase"/>
    <property type="match status" value="1"/>
</dbReference>
<dbReference type="Gene3D" id="3.40.50.1400">
    <property type="match status" value="2"/>
</dbReference>
<dbReference type="HAMAP" id="MF_00323">
    <property type="entry name" value="Ferrochelatase"/>
    <property type="match status" value="1"/>
</dbReference>
<dbReference type="InterPro" id="IPR001015">
    <property type="entry name" value="Ferrochelatase"/>
</dbReference>
<dbReference type="InterPro" id="IPR019772">
    <property type="entry name" value="Ferrochelatase_AS"/>
</dbReference>
<dbReference type="InterPro" id="IPR033644">
    <property type="entry name" value="Ferrochelatase_C"/>
</dbReference>
<dbReference type="InterPro" id="IPR033659">
    <property type="entry name" value="Ferrochelatase_N"/>
</dbReference>
<dbReference type="NCBIfam" id="TIGR00109">
    <property type="entry name" value="hemH"/>
    <property type="match status" value="1"/>
</dbReference>
<dbReference type="PANTHER" id="PTHR11108">
    <property type="entry name" value="FERROCHELATASE"/>
    <property type="match status" value="1"/>
</dbReference>
<dbReference type="PANTHER" id="PTHR11108:SF1">
    <property type="entry name" value="FERROCHELATASE, MITOCHONDRIAL"/>
    <property type="match status" value="1"/>
</dbReference>
<dbReference type="Pfam" id="PF00762">
    <property type="entry name" value="Ferrochelatase"/>
    <property type="match status" value="1"/>
</dbReference>
<dbReference type="SUPFAM" id="SSF53800">
    <property type="entry name" value="Chelatase"/>
    <property type="match status" value="1"/>
</dbReference>
<dbReference type="PROSITE" id="PS00534">
    <property type="entry name" value="FERROCHELATASE"/>
    <property type="match status" value="1"/>
</dbReference>
<evidence type="ECO:0000255" key="1">
    <source>
        <dbReference type="HAMAP-Rule" id="MF_00323"/>
    </source>
</evidence>
<evidence type="ECO:0000305" key="2"/>
<proteinExistence type="inferred from homology"/>
<reference key="1">
    <citation type="journal article" date="2004" name="Proc. Natl. Acad. Sci. U.S.A.">
        <title>Insights into the evolution of Yersinia pestis through whole-genome comparison with Yersinia pseudotuberculosis.</title>
        <authorList>
            <person name="Chain P.S.G."/>
            <person name="Carniel E."/>
            <person name="Larimer F.W."/>
            <person name="Lamerdin J."/>
            <person name="Stoutland P.O."/>
            <person name="Regala W.M."/>
            <person name="Georgescu A.M."/>
            <person name="Vergez L.M."/>
            <person name="Land M.L."/>
            <person name="Motin V.L."/>
            <person name="Brubaker R.R."/>
            <person name="Fowler J."/>
            <person name="Hinnebusch J."/>
            <person name="Marceau M."/>
            <person name="Medigue C."/>
            <person name="Simonet M."/>
            <person name="Chenal-Francisque V."/>
            <person name="Souza B."/>
            <person name="Dacheux D."/>
            <person name="Elliott J.M."/>
            <person name="Derbise A."/>
            <person name="Hauser L.J."/>
            <person name="Garcia E."/>
        </authorList>
    </citation>
    <scope>NUCLEOTIDE SEQUENCE [LARGE SCALE GENOMIC DNA]</scope>
    <source>
        <strain>IP32953</strain>
    </source>
</reference>
<reference key="2">
    <citation type="journal article" date="1993" name="J. Bacteriol.">
        <title>Molecular analysis of the 3,6-dideoxyhexose pathway genes of Yersinia pseudotuberculosis serogroup IIA.</title>
        <authorList>
            <person name="Kessler A.C."/>
            <person name="Haase A."/>
            <person name="Reeves P.R."/>
        </authorList>
    </citation>
    <scope>NUCLEOTIDE SEQUENCE [GENOMIC DNA] OF 244-320</scope>
</reference>
<feature type="chain" id="PRO_0000175235" description="Ferrochelatase">
    <location>
        <begin position="1"/>
        <end position="320"/>
    </location>
</feature>
<feature type="binding site" evidence="1">
    <location>
        <position position="194"/>
    </location>
    <ligand>
        <name>Fe cation</name>
        <dbReference type="ChEBI" id="CHEBI:24875"/>
    </ligand>
</feature>
<feature type="binding site" evidence="1">
    <location>
        <position position="275"/>
    </location>
    <ligand>
        <name>Fe cation</name>
        <dbReference type="ChEBI" id="CHEBI:24875"/>
    </ligand>
</feature>
<sequence>MMQSKPGVLMVNLGTPDAPTSKAIKRYLAEFLSDRRVVDTSPLLWWPLLHGVILPLRSPRVAKLYQSVWMEEGSPLLVYSRRQQKALAARMPDIPVELGMSYGSPNLPEAIEKLLAQGVTNLVILPLYPQYSCSTSAAVWDAVARVLKGYRRLPSISFIRDYAEHPAYISALKQSVERSFAEHGQPDRLVMSFHGIPKRYAQLGDDYPIRCEDTSRALRAALPLPAEKIIMTYQSRFGREPWLTPYTDETLKSLPSQGVKHIQLICPGFSADCLETLEEIKEQNREFFLHAGGEKFEYIPALNDDEGHIALLEQLIRHNI</sequence>
<comment type="function">
    <text evidence="1">Catalyzes the ferrous insertion into protoporphyrin IX.</text>
</comment>
<comment type="catalytic activity">
    <reaction evidence="1">
        <text>heme b + 2 H(+) = protoporphyrin IX + Fe(2+)</text>
        <dbReference type="Rhea" id="RHEA:22584"/>
        <dbReference type="ChEBI" id="CHEBI:15378"/>
        <dbReference type="ChEBI" id="CHEBI:29033"/>
        <dbReference type="ChEBI" id="CHEBI:57306"/>
        <dbReference type="ChEBI" id="CHEBI:60344"/>
        <dbReference type="EC" id="4.98.1.1"/>
    </reaction>
</comment>
<comment type="pathway">
    <text evidence="1">Porphyrin-containing compound metabolism; protoheme biosynthesis; protoheme from protoporphyrin-IX: step 1/1.</text>
</comment>
<comment type="subcellular location">
    <subcellularLocation>
        <location evidence="1">Cytoplasm</location>
    </subcellularLocation>
</comment>
<comment type="similarity">
    <text evidence="1 2">Belongs to the ferrochelatase family.</text>
</comment>
<gene>
    <name evidence="1" type="primary">hemH</name>
    <name type="ordered locus">YPTB0997</name>
</gene>
<name>HEMH_YERPS</name>
<keyword id="KW-0963">Cytoplasm</keyword>
<keyword id="KW-0350">Heme biosynthesis</keyword>
<keyword id="KW-0408">Iron</keyword>
<keyword id="KW-0456">Lyase</keyword>
<keyword id="KW-0479">Metal-binding</keyword>
<keyword id="KW-0627">Porphyrin biosynthesis</keyword>